<feature type="chain" id="PRO_1000025445" description="Argininosuccinate synthase">
    <location>
        <begin position="1"/>
        <end position="454"/>
    </location>
</feature>
<feature type="binding site" evidence="1">
    <location>
        <begin position="17"/>
        <end position="25"/>
    </location>
    <ligand>
        <name>ATP</name>
        <dbReference type="ChEBI" id="CHEBI:30616"/>
    </ligand>
</feature>
<feature type="binding site" evidence="1">
    <location>
        <position position="43"/>
    </location>
    <ligand>
        <name>ATP</name>
        <dbReference type="ChEBI" id="CHEBI:30616"/>
    </ligand>
</feature>
<feature type="binding site" evidence="1">
    <location>
        <position position="99"/>
    </location>
    <ligand>
        <name>L-citrulline</name>
        <dbReference type="ChEBI" id="CHEBI:57743"/>
    </ligand>
</feature>
<feature type="binding site" evidence="1">
    <location>
        <position position="129"/>
    </location>
    <ligand>
        <name>ATP</name>
        <dbReference type="ChEBI" id="CHEBI:30616"/>
    </ligand>
</feature>
<feature type="binding site" evidence="1">
    <location>
        <position position="131"/>
    </location>
    <ligand>
        <name>ATP</name>
        <dbReference type="ChEBI" id="CHEBI:30616"/>
    </ligand>
</feature>
<feature type="binding site" evidence="1">
    <location>
        <position position="131"/>
    </location>
    <ligand>
        <name>L-aspartate</name>
        <dbReference type="ChEBI" id="CHEBI:29991"/>
    </ligand>
</feature>
<feature type="binding site" evidence="1">
    <location>
        <position position="135"/>
    </location>
    <ligand>
        <name>L-aspartate</name>
        <dbReference type="ChEBI" id="CHEBI:29991"/>
    </ligand>
</feature>
<feature type="binding site" evidence="1">
    <location>
        <position position="135"/>
    </location>
    <ligand>
        <name>L-citrulline</name>
        <dbReference type="ChEBI" id="CHEBI:57743"/>
    </ligand>
</feature>
<feature type="binding site" evidence="1">
    <location>
        <position position="136"/>
    </location>
    <ligand>
        <name>ATP</name>
        <dbReference type="ChEBI" id="CHEBI:30616"/>
    </ligand>
</feature>
<feature type="binding site" evidence="1">
    <location>
        <position position="136"/>
    </location>
    <ligand>
        <name>L-aspartate</name>
        <dbReference type="ChEBI" id="CHEBI:29991"/>
    </ligand>
</feature>
<feature type="binding site" evidence="1">
    <location>
        <position position="139"/>
    </location>
    <ligand>
        <name>L-citrulline</name>
        <dbReference type="ChEBI" id="CHEBI:57743"/>
    </ligand>
</feature>
<feature type="binding site" evidence="1">
    <location>
        <position position="192"/>
    </location>
    <ligand>
        <name>L-citrulline</name>
        <dbReference type="ChEBI" id="CHEBI:57743"/>
    </ligand>
</feature>
<feature type="binding site" evidence="1">
    <location>
        <position position="194"/>
    </location>
    <ligand>
        <name>ATP</name>
        <dbReference type="ChEBI" id="CHEBI:30616"/>
    </ligand>
</feature>
<feature type="binding site" evidence="1">
    <location>
        <position position="201"/>
    </location>
    <ligand>
        <name>L-citrulline</name>
        <dbReference type="ChEBI" id="CHEBI:57743"/>
    </ligand>
</feature>
<feature type="binding site" evidence="1">
    <location>
        <position position="203"/>
    </location>
    <ligand>
        <name>L-citrulline</name>
        <dbReference type="ChEBI" id="CHEBI:57743"/>
    </ligand>
</feature>
<feature type="binding site" evidence="1">
    <location>
        <position position="280"/>
    </location>
    <ligand>
        <name>L-citrulline</name>
        <dbReference type="ChEBI" id="CHEBI:57743"/>
    </ligand>
</feature>
<gene>
    <name evidence="1" type="primary">argG</name>
    <name type="ordered locus">YE2680</name>
</gene>
<evidence type="ECO:0000255" key="1">
    <source>
        <dbReference type="HAMAP-Rule" id="MF_00581"/>
    </source>
</evidence>
<organism>
    <name type="scientific">Yersinia enterocolitica serotype O:8 / biotype 1B (strain NCTC 13174 / 8081)</name>
    <dbReference type="NCBI Taxonomy" id="393305"/>
    <lineage>
        <taxon>Bacteria</taxon>
        <taxon>Pseudomonadati</taxon>
        <taxon>Pseudomonadota</taxon>
        <taxon>Gammaproteobacteria</taxon>
        <taxon>Enterobacterales</taxon>
        <taxon>Yersiniaceae</taxon>
        <taxon>Yersinia</taxon>
    </lineage>
</organism>
<protein>
    <recommendedName>
        <fullName evidence="1">Argininosuccinate synthase</fullName>
        <ecNumber evidence="1">6.3.4.5</ecNumber>
    </recommendedName>
    <alternativeName>
        <fullName evidence="1">Citrulline--aspartate ligase</fullName>
    </alternativeName>
</protein>
<accession>A1JTL6</accession>
<dbReference type="EC" id="6.3.4.5" evidence="1"/>
<dbReference type="EMBL" id="AM286415">
    <property type="protein sequence ID" value="CAL12713.1"/>
    <property type="molecule type" value="Genomic_DNA"/>
</dbReference>
<dbReference type="RefSeq" id="WP_005165407.1">
    <property type="nucleotide sequence ID" value="NC_008800.1"/>
</dbReference>
<dbReference type="RefSeq" id="YP_001006871.1">
    <property type="nucleotide sequence ID" value="NC_008800.1"/>
</dbReference>
<dbReference type="SMR" id="A1JTL6"/>
<dbReference type="GeneID" id="31409612"/>
<dbReference type="KEGG" id="yen:YE2680"/>
<dbReference type="PATRIC" id="fig|393305.7.peg.2846"/>
<dbReference type="eggNOG" id="COG0137">
    <property type="taxonomic scope" value="Bacteria"/>
</dbReference>
<dbReference type="HOGENOM" id="CLU_032784_4_1_6"/>
<dbReference type="OrthoDB" id="9801641at2"/>
<dbReference type="UniPathway" id="UPA00068">
    <property type="reaction ID" value="UER00113"/>
</dbReference>
<dbReference type="Proteomes" id="UP000000642">
    <property type="component" value="Chromosome"/>
</dbReference>
<dbReference type="GO" id="GO:0005737">
    <property type="term" value="C:cytoplasm"/>
    <property type="evidence" value="ECO:0007669"/>
    <property type="project" value="UniProtKB-SubCell"/>
</dbReference>
<dbReference type="GO" id="GO:0004055">
    <property type="term" value="F:argininosuccinate synthase activity"/>
    <property type="evidence" value="ECO:0007669"/>
    <property type="project" value="UniProtKB-UniRule"/>
</dbReference>
<dbReference type="GO" id="GO:0005524">
    <property type="term" value="F:ATP binding"/>
    <property type="evidence" value="ECO:0007669"/>
    <property type="project" value="UniProtKB-UniRule"/>
</dbReference>
<dbReference type="GO" id="GO:0042803">
    <property type="term" value="F:protein homodimerization activity"/>
    <property type="evidence" value="ECO:0007669"/>
    <property type="project" value="InterPro"/>
</dbReference>
<dbReference type="GO" id="GO:0000053">
    <property type="term" value="P:argininosuccinate metabolic process"/>
    <property type="evidence" value="ECO:0007669"/>
    <property type="project" value="TreeGrafter"/>
</dbReference>
<dbReference type="GO" id="GO:0006526">
    <property type="term" value="P:L-arginine biosynthetic process"/>
    <property type="evidence" value="ECO:0007669"/>
    <property type="project" value="UniProtKB-UniRule"/>
</dbReference>
<dbReference type="GO" id="GO:0000050">
    <property type="term" value="P:urea cycle"/>
    <property type="evidence" value="ECO:0007669"/>
    <property type="project" value="TreeGrafter"/>
</dbReference>
<dbReference type="CDD" id="cd01999">
    <property type="entry name" value="ASS"/>
    <property type="match status" value="1"/>
</dbReference>
<dbReference type="FunFam" id="1.10.287.400:FF:000001">
    <property type="entry name" value="Argininosuccinate synthase"/>
    <property type="match status" value="1"/>
</dbReference>
<dbReference type="Gene3D" id="1.10.287.400">
    <property type="match status" value="1"/>
</dbReference>
<dbReference type="Gene3D" id="3.90.1260.10">
    <property type="entry name" value="Argininosuccinate synthetase, chain A, domain 2"/>
    <property type="match status" value="1"/>
</dbReference>
<dbReference type="Gene3D" id="3.40.50.620">
    <property type="entry name" value="HUPs"/>
    <property type="match status" value="1"/>
</dbReference>
<dbReference type="HAMAP" id="MF_00581">
    <property type="entry name" value="Arg_succ_synth_type2"/>
    <property type="match status" value="1"/>
</dbReference>
<dbReference type="InterPro" id="IPR023437">
    <property type="entry name" value="Arg_succ_synth_type2_subfam"/>
</dbReference>
<dbReference type="InterPro" id="IPR048268">
    <property type="entry name" value="Arginosuc_syn_C"/>
</dbReference>
<dbReference type="InterPro" id="IPR048267">
    <property type="entry name" value="Arginosuc_syn_N"/>
</dbReference>
<dbReference type="InterPro" id="IPR001518">
    <property type="entry name" value="Arginosuc_synth"/>
</dbReference>
<dbReference type="InterPro" id="IPR018223">
    <property type="entry name" value="Arginosuc_synth_CS"/>
</dbReference>
<dbReference type="InterPro" id="IPR023434">
    <property type="entry name" value="Arginosuc_synth_type_1_subfam"/>
</dbReference>
<dbReference type="InterPro" id="IPR024074">
    <property type="entry name" value="AS_cat/multimer_dom_body"/>
</dbReference>
<dbReference type="InterPro" id="IPR024073">
    <property type="entry name" value="AS_multimer_C_tail"/>
</dbReference>
<dbReference type="InterPro" id="IPR014729">
    <property type="entry name" value="Rossmann-like_a/b/a_fold"/>
</dbReference>
<dbReference type="NCBIfam" id="TIGR00032">
    <property type="entry name" value="argG"/>
    <property type="match status" value="1"/>
</dbReference>
<dbReference type="NCBIfam" id="NF003779">
    <property type="entry name" value="PRK05370.1"/>
    <property type="match status" value="1"/>
</dbReference>
<dbReference type="PANTHER" id="PTHR11587">
    <property type="entry name" value="ARGININOSUCCINATE SYNTHASE"/>
    <property type="match status" value="1"/>
</dbReference>
<dbReference type="PANTHER" id="PTHR11587:SF2">
    <property type="entry name" value="ARGININOSUCCINATE SYNTHASE"/>
    <property type="match status" value="1"/>
</dbReference>
<dbReference type="Pfam" id="PF20979">
    <property type="entry name" value="Arginosuc_syn_C"/>
    <property type="match status" value="1"/>
</dbReference>
<dbReference type="Pfam" id="PF00764">
    <property type="entry name" value="Arginosuc_synth"/>
    <property type="match status" value="1"/>
</dbReference>
<dbReference type="SUPFAM" id="SSF52402">
    <property type="entry name" value="Adenine nucleotide alpha hydrolases-like"/>
    <property type="match status" value="1"/>
</dbReference>
<dbReference type="SUPFAM" id="SSF69864">
    <property type="entry name" value="Argininosuccinate synthetase, C-terminal domain"/>
    <property type="match status" value="1"/>
</dbReference>
<dbReference type="PROSITE" id="PS00564">
    <property type="entry name" value="ARGININOSUCCIN_SYN_1"/>
    <property type="match status" value="1"/>
</dbReference>
<dbReference type="PROSITE" id="PS00565">
    <property type="entry name" value="ARGININOSUCCIN_SYN_2"/>
    <property type="match status" value="1"/>
</dbReference>
<sequence>MTTILKHLPINQRVGIAFSGGLDTSAALLWMQKKGAIPYAYTANLGQPDEEDYDAIPRKAMEYGAEKARLIDCRKQLVAEGIAAIQCGAFHNTTAGVTYFNTTPLGRAVTGTMLVAAMKEDGVNIWGDGSTYKGNDIERFYRYGLLTNAELKIYKPWLDTDFIDELGGRHEMSEFMIQSGFDYKMSTEKAYSTDSNMLGATHEAKDLEFLNSSVKIVNPIMGVKFWDENVVVKAEEVSVRFERGYPVALNGVVFDDSVELMMEANRIGGRHGLGMSDQIENRIIEAKSRGIYEAPGMALLHIAYERLLTGIHNEDTIEQYHANGRVLGRLLYQGRWFDPQALMLRDSAQRWVASEITGEVTLELRRGNDYSILNTVSENLTYQPERLTMEKGDSVFSPDDRIGQLTMRNLDITDTRKKLFSYATTGLLSASAEVGLPQVDNNNLTARGLQDKSK</sequence>
<reference key="1">
    <citation type="journal article" date="2006" name="PLoS Genet.">
        <title>The complete genome sequence and comparative genome analysis of the high pathogenicity Yersinia enterocolitica strain 8081.</title>
        <authorList>
            <person name="Thomson N.R."/>
            <person name="Howard S."/>
            <person name="Wren B.W."/>
            <person name="Holden M.T.G."/>
            <person name="Crossman L."/>
            <person name="Challis G.L."/>
            <person name="Churcher C."/>
            <person name="Mungall K."/>
            <person name="Brooks K."/>
            <person name="Chillingworth T."/>
            <person name="Feltwell T."/>
            <person name="Abdellah Z."/>
            <person name="Hauser H."/>
            <person name="Jagels K."/>
            <person name="Maddison M."/>
            <person name="Moule S."/>
            <person name="Sanders M."/>
            <person name="Whitehead S."/>
            <person name="Quail M.A."/>
            <person name="Dougan G."/>
            <person name="Parkhill J."/>
            <person name="Prentice M.B."/>
        </authorList>
    </citation>
    <scope>NUCLEOTIDE SEQUENCE [LARGE SCALE GENOMIC DNA]</scope>
    <source>
        <strain>NCTC 13174 / 8081</strain>
    </source>
</reference>
<name>ASSY_YERE8</name>
<keyword id="KW-0028">Amino-acid biosynthesis</keyword>
<keyword id="KW-0055">Arginine biosynthesis</keyword>
<keyword id="KW-0067">ATP-binding</keyword>
<keyword id="KW-0963">Cytoplasm</keyword>
<keyword id="KW-0436">Ligase</keyword>
<keyword id="KW-0547">Nucleotide-binding</keyword>
<proteinExistence type="inferred from homology"/>
<comment type="catalytic activity">
    <reaction evidence="1">
        <text>L-citrulline + L-aspartate + ATP = 2-(N(omega)-L-arginino)succinate + AMP + diphosphate + H(+)</text>
        <dbReference type="Rhea" id="RHEA:10932"/>
        <dbReference type="ChEBI" id="CHEBI:15378"/>
        <dbReference type="ChEBI" id="CHEBI:29991"/>
        <dbReference type="ChEBI" id="CHEBI:30616"/>
        <dbReference type="ChEBI" id="CHEBI:33019"/>
        <dbReference type="ChEBI" id="CHEBI:57472"/>
        <dbReference type="ChEBI" id="CHEBI:57743"/>
        <dbReference type="ChEBI" id="CHEBI:456215"/>
        <dbReference type="EC" id="6.3.4.5"/>
    </reaction>
</comment>
<comment type="pathway">
    <text evidence="1">Amino-acid biosynthesis; L-arginine biosynthesis; L-arginine from L-ornithine and carbamoyl phosphate: step 2/3.</text>
</comment>
<comment type="subunit">
    <text evidence="1">Homotetramer.</text>
</comment>
<comment type="subcellular location">
    <subcellularLocation>
        <location evidence="1">Cytoplasm</location>
    </subcellularLocation>
</comment>
<comment type="similarity">
    <text evidence="1">Belongs to the argininosuccinate synthase family. Type 2 subfamily.</text>
</comment>